<feature type="chain" id="PRO_0000302066" description="Mediator of RNA polymerase II transcription subunit 4">
    <location>
        <begin position="1"/>
        <end position="252"/>
    </location>
</feature>
<feature type="region of interest" description="Disordered" evidence="3">
    <location>
        <begin position="213"/>
        <end position="252"/>
    </location>
</feature>
<feature type="coiled-coil region" evidence="2">
    <location>
        <begin position="5"/>
        <end position="31"/>
    </location>
</feature>
<feature type="coiled-coil region" evidence="2">
    <location>
        <begin position="70"/>
        <end position="112"/>
    </location>
</feature>
<feature type="compositionally biased region" description="Low complexity" evidence="3">
    <location>
        <begin position="241"/>
        <end position="252"/>
    </location>
</feature>
<dbReference type="EMBL" id="BC084617">
    <property type="protein sequence ID" value="AAH84617.1"/>
    <property type="molecule type" value="mRNA"/>
</dbReference>
<dbReference type="RefSeq" id="NP_001088367.1">
    <property type="nucleotide sequence ID" value="NM_001094898.1"/>
</dbReference>
<dbReference type="SMR" id="Q5XG48"/>
<dbReference type="DNASU" id="495214"/>
<dbReference type="GeneID" id="495214"/>
<dbReference type="KEGG" id="xla:495214"/>
<dbReference type="AGR" id="Xenbase:XB-GENE-972357"/>
<dbReference type="CTD" id="495214"/>
<dbReference type="Xenbase" id="XB-GENE-972357">
    <property type="gene designation" value="med4.S"/>
</dbReference>
<dbReference type="OrthoDB" id="1929813at2759"/>
<dbReference type="Proteomes" id="UP000186698">
    <property type="component" value="Chromosome 2S"/>
</dbReference>
<dbReference type="Bgee" id="495214">
    <property type="expression patterns" value="Expressed in oocyte and 19 other cell types or tissues"/>
</dbReference>
<dbReference type="GO" id="GO:0070847">
    <property type="term" value="C:core mediator complex"/>
    <property type="evidence" value="ECO:0000318"/>
    <property type="project" value="GO_Central"/>
</dbReference>
<dbReference type="GO" id="GO:0016592">
    <property type="term" value="C:mediator complex"/>
    <property type="evidence" value="ECO:0007669"/>
    <property type="project" value="InterPro"/>
</dbReference>
<dbReference type="GO" id="GO:0003712">
    <property type="term" value="F:transcription coregulator activity"/>
    <property type="evidence" value="ECO:0000318"/>
    <property type="project" value="GO_Central"/>
</dbReference>
<dbReference type="GO" id="GO:0006357">
    <property type="term" value="P:regulation of transcription by RNA polymerase II"/>
    <property type="evidence" value="ECO:0000318"/>
    <property type="project" value="GO_Central"/>
</dbReference>
<dbReference type="InterPro" id="IPR019258">
    <property type="entry name" value="Mediator_Med4"/>
</dbReference>
<dbReference type="PANTHER" id="PTHR13208">
    <property type="entry name" value="MEDIATOR OF RNA POLYMERASE II TRANSCRIPTION SUBUNIT 4"/>
    <property type="match status" value="1"/>
</dbReference>
<dbReference type="PANTHER" id="PTHR13208:SF2">
    <property type="entry name" value="MEDIATOR OF RNA POLYMERASE II TRANSCRIPTION SUBUNIT 4"/>
    <property type="match status" value="1"/>
</dbReference>
<dbReference type="Pfam" id="PF10018">
    <property type="entry name" value="Med4"/>
    <property type="match status" value="1"/>
</dbReference>
<protein>
    <recommendedName>
        <fullName>Mediator of RNA polymerase II transcription subunit 4</fullName>
    </recommendedName>
    <alternativeName>
        <fullName>Mediator complex subunit 4</fullName>
    </alternativeName>
</protein>
<sequence>MAVPKKSTKERLESLLDDLEVLSREVIETLALSRSQKLSQPGEENQILELLIQKDGEFQELMKVAFSQGKTHQEMQVLEKEVEKRDSDIQQLQKQLKEAEHILATAVYQAKEKLKSIDKARKGVISSEELIKYAHRISASNAVCAPLTWVPGDPRRPYPTDLEMRSGLLGQMSNLPTNGVNGHLPGDALAAGRLPDVLAPQYPWQSSDMSMNMLPPNHSNEFLMESLGPNKENEEDVEVMSTDSSSSSSDSD</sequence>
<organism>
    <name type="scientific">Xenopus laevis</name>
    <name type="common">African clawed frog</name>
    <dbReference type="NCBI Taxonomy" id="8355"/>
    <lineage>
        <taxon>Eukaryota</taxon>
        <taxon>Metazoa</taxon>
        <taxon>Chordata</taxon>
        <taxon>Craniata</taxon>
        <taxon>Vertebrata</taxon>
        <taxon>Euteleostomi</taxon>
        <taxon>Amphibia</taxon>
        <taxon>Batrachia</taxon>
        <taxon>Anura</taxon>
        <taxon>Pipoidea</taxon>
        <taxon>Pipidae</taxon>
        <taxon>Xenopodinae</taxon>
        <taxon>Xenopus</taxon>
        <taxon>Xenopus</taxon>
    </lineage>
</organism>
<name>MED4_XENLA</name>
<accession>Q5XG48</accession>
<comment type="function">
    <text evidence="1">Component of the Mediator complex, a coactivator involved in the regulated transcription of nearly all RNA polymerase II-dependent genes. Mediator functions as a bridge to convey information from gene-specific regulatory proteins to the basal RNA polymerase II transcription machinery. Mediator is recruited to promoters by direct interactions with regulatory proteins and serves as a scaffold for the assembly of a functional preinitiation complex with RNA polymerase II and the general transcription factors (By similarity).</text>
</comment>
<comment type="subunit">
    <text evidence="1">Component of the Mediator complex.</text>
</comment>
<comment type="subcellular location">
    <subcellularLocation>
        <location evidence="1">Nucleus</location>
    </subcellularLocation>
</comment>
<comment type="similarity">
    <text evidence="4">Belongs to the Mediator complex subunit 4 family.</text>
</comment>
<proteinExistence type="evidence at transcript level"/>
<gene>
    <name type="primary">med4</name>
</gene>
<reference key="1">
    <citation type="submission" date="2004-10" db="EMBL/GenBank/DDBJ databases">
        <authorList>
            <consortium name="NIH - Xenopus Gene Collection (XGC) project"/>
        </authorList>
    </citation>
    <scope>NUCLEOTIDE SEQUENCE [LARGE SCALE MRNA]</scope>
    <source>
        <tissue>Kidney</tissue>
    </source>
</reference>
<evidence type="ECO:0000250" key="1"/>
<evidence type="ECO:0000255" key="2"/>
<evidence type="ECO:0000256" key="3">
    <source>
        <dbReference type="SAM" id="MobiDB-lite"/>
    </source>
</evidence>
<evidence type="ECO:0000305" key="4"/>
<keyword id="KW-0010">Activator</keyword>
<keyword id="KW-0175">Coiled coil</keyword>
<keyword id="KW-0539">Nucleus</keyword>
<keyword id="KW-1185">Reference proteome</keyword>
<keyword id="KW-0804">Transcription</keyword>
<keyword id="KW-0805">Transcription regulation</keyword>